<gene>
    <name evidence="1" type="primary">frr</name>
    <name type="ordered locus">WIGBR3890</name>
</gene>
<proteinExistence type="inferred from homology"/>
<reference key="1">
    <citation type="journal article" date="2002" name="Nat. Genet.">
        <title>Genome sequence of the endocellular obligate symbiont of tsetse flies, Wigglesworthia glossinidia.</title>
        <authorList>
            <person name="Akman L."/>
            <person name="Yamashita A."/>
            <person name="Watanabe H."/>
            <person name="Oshima K."/>
            <person name="Shiba T."/>
            <person name="Hattori M."/>
            <person name="Aksoy S."/>
        </authorList>
    </citation>
    <scope>NUCLEOTIDE SEQUENCE [LARGE SCALE GENOMIC DNA]</scope>
</reference>
<keyword id="KW-0963">Cytoplasm</keyword>
<keyword id="KW-0648">Protein biosynthesis</keyword>
<keyword id="KW-1185">Reference proteome</keyword>
<name>RRF_WIGBR</name>
<accession>Q8D2G5</accession>
<organism>
    <name type="scientific">Wigglesworthia glossinidia brevipalpis</name>
    <dbReference type="NCBI Taxonomy" id="36870"/>
    <lineage>
        <taxon>Bacteria</taxon>
        <taxon>Pseudomonadati</taxon>
        <taxon>Pseudomonadota</taxon>
        <taxon>Gammaproteobacteria</taxon>
        <taxon>Enterobacterales</taxon>
        <taxon>Erwiniaceae</taxon>
        <taxon>Wigglesworthia</taxon>
    </lineage>
</organism>
<dbReference type="EMBL" id="BA000021">
    <property type="protein sequence ID" value="BAC24535.1"/>
    <property type="molecule type" value="Genomic_DNA"/>
</dbReference>
<dbReference type="SMR" id="Q8D2G5"/>
<dbReference type="STRING" id="36870.gene:10368889"/>
<dbReference type="KEGG" id="wbr:frr"/>
<dbReference type="eggNOG" id="COG0233">
    <property type="taxonomic scope" value="Bacteria"/>
</dbReference>
<dbReference type="HOGENOM" id="CLU_073981_2_1_6"/>
<dbReference type="OrthoDB" id="9804006at2"/>
<dbReference type="Proteomes" id="UP000000562">
    <property type="component" value="Chromosome"/>
</dbReference>
<dbReference type="GO" id="GO:0005829">
    <property type="term" value="C:cytosol"/>
    <property type="evidence" value="ECO:0007669"/>
    <property type="project" value="GOC"/>
</dbReference>
<dbReference type="GO" id="GO:0043023">
    <property type="term" value="F:ribosomal large subunit binding"/>
    <property type="evidence" value="ECO:0007669"/>
    <property type="project" value="TreeGrafter"/>
</dbReference>
<dbReference type="GO" id="GO:0002184">
    <property type="term" value="P:cytoplasmic translational termination"/>
    <property type="evidence" value="ECO:0007669"/>
    <property type="project" value="TreeGrafter"/>
</dbReference>
<dbReference type="FunFam" id="3.30.1360.40:FF:000001">
    <property type="entry name" value="Ribosome-recycling factor"/>
    <property type="match status" value="1"/>
</dbReference>
<dbReference type="Gene3D" id="3.30.1360.40">
    <property type="match status" value="1"/>
</dbReference>
<dbReference type="Gene3D" id="1.10.132.20">
    <property type="entry name" value="Ribosome-recycling factor"/>
    <property type="match status" value="1"/>
</dbReference>
<dbReference type="HAMAP" id="MF_00040">
    <property type="entry name" value="RRF"/>
    <property type="match status" value="1"/>
</dbReference>
<dbReference type="InterPro" id="IPR002661">
    <property type="entry name" value="Ribosome_recyc_fac"/>
</dbReference>
<dbReference type="InterPro" id="IPR023584">
    <property type="entry name" value="Ribosome_recyc_fac_dom"/>
</dbReference>
<dbReference type="InterPro" id="IPR036191">
    <property type="entry name" value="RRF_sf"/>
</dbReference>
<dbReference type="NCBIfam" id="TIGR00496">
    <property type="entry name" value="frr"/>
    <property type="match status" value="1"/>
</dbReference>
<dbReference type="PANTHER" id="PTHR20982:SF3">
    <property type="entry name" value="MITOCHONDRIAL RIBOSOME RECYCLING FACTOR PSEUDO 1"/>
    <property type="match status" value="1"/>
</dbReference>
<dbReference type="PANTHER" id="PTHR20982">
    <property type="entry name" value="RIBOSOME RECYCLING FACTOR"/>
    <property type="match status" value="1"/>
</dbReference>
<dbReference type="Pfam" id="PF01765">
    <property type="entry name" value="RRF"/>
    <property type="match status" value="1"/>
</dbReference>
<dbReference type="SUPFAM" id="SSF55194">
    <property type="entry name" value="Ribosome recycling factor, RRF"/>
    <property type="match status" value="1"/>
</dbReference>
<comment type="function">
    <text evidence="1">Responsible for the release of ribosomes from messenger RNA at the termination of protein biosynthesis. May increase the efficiency of translation by recycling ribosomes from one round of translation to another.</text>
</comment>
<comment type="subcellular location">
    <subcellularLocation>
        <location evidence="1">Cytoplasm</location>
    </subcellularLocation>
</comment>
<comment type="similarity">
    <text evidence="1">Belongs to the RRF family.</text>
</comment>
<sequence>MINEIYENSNSRMKKSIDFFKKNISKIRTNRVSPSLIENIYINCYGTSVPLSKLSNILSEKSNILKINVFDNNIIKKIEQAILSSDLGVNPQIQENYIRIEFPKLTEARRFELIKLINKEAEQNIISIRNIRRDANEKIKKLIKAKTIGKDEDKKFQEVIQNLTNSRIEDTKKILKLKEKEIKKI</sequence>
<protein>
    <recommendedName>
        <fullName evidence="1">Ribosome-recycling factor</fullName>
        <shortName evidence="1">RRF</shortName>
    </recommendedName>
    <alternativeName>
        <fullName evidence="1">Ribosome-releasing factor</fullName>
    </alternativeName>
</protein>
<evidence type="ECO:0000255" key="1">
    <source>
        <dbReference type="HAMAP-Rule" id="MF_00040"/>
    </source>
</evidence>
<feature type="chain" id="PRO_0000167578" description="Ribosome-recycling factor">
    <location>
        <begin position="1"/>
        <end position="185"/>
    </location>
</feature>